<evidence type="ECO:0000255" key="1">
    <source>
        <dbReference type="HAMAP-Rule" id="MF_00607"/>
    </source>
</evidence>
<sequence>MRAYRDQHFLTDPRIVARIADILDISGRIVLEIGPGEGILTEALLERGARVISVELDRTLIERLSRRFASEIADGSLTLLQGDAVKVPLPPFEIVMANLPYSISSPITFRLLDIGFEAAILMYQKEFADRMMAHPGTRDCGRLSIMLQTYARANRCFDLPPGAFSPPPAVRSTVMWIEPREPLFPIHDRKIYEDLVRELFTRRRKTVQSTLKALAGMFGKEKIDSVVRDLNPEILSSRPEALYLEDFATISNQLSS</sequence>
<feature type="chain" id="PRO_0000257382" description="Probable ribosomal RNA small subunit methyltransferase A">
    <location>
        <begin position="1"/>
        <end position="256"/>
    </location>
</feature>
<feature type="binding site" evidence="1">
    <location>
        <position position="8"/>
    </location>
    <ligand>
        <name>S-adenosyl-L-methionine</name>
        <dbReference type="ChEBI" id="CHEBI:59789"/>
    </ligand>
</feature>
<feature type="binding site" evidence="1">
    <location>
        <position position="10"/>
    </location>
    <ligand>
        <name>S-adenosyl-L-methionine</name>
        <dbReference type="ChEBI" id="CHEBI:59789"/>
    </ligand>
</feature>
<feature type="binding site" evidence="1">
    <location>
        <position position="34"/>
    </location>
    <ligand>
        <name>S-adenosyl-L-methionine</name>
        <dbReference type="ChEBI" id="CHEBI:59789"/>
    </ligand>
</feature>
<feature type="binding site" evidence="1">
    <location>
        <position position="55"/>
    </location>
    <ligand>
        <name>S-adenosyl-L-methionine</name>
        <dbReference type="ChEBI" id="CHEBI:59789"/>
    </ligand>
</feature>
<feature type="binding site" evidence="1">
    <location>
        <position position="83"/>
    </location>
    <ligand>
        <name>S-adenosyl-L-methionine</name>
        <dbReference type="ChEBI" id="CHEBI:59789"/>
    </ligand>
</feature>
<feature type="binding site" evidence="1">
    <location>
        <position position="98"/>
    </location>
    <ligand>
        <name>S-adenosyl-L-methionine</name>
        <dbReference type="ChEBI" id="CHEBI:59789"/>
    </ligand>
</feature>
<dbReference type="EC" id="2.1.1.-" evidence="1"/>
<dbReference type="EMBL" id="CP000254">
    <property type="protein sequence ID" value="ABD42716.1"/>
    <property type="molecule type" value="Genomic_DNA"/>
</dbReference>
<dbReference type="RefSeq" id="WP_011449967.1">
    <property type="nucleotide sequence ID" value="NC_007796.1"/>
</dbReference>
<dbReference type="SMR" id="Q2FSA9"/>
<dbReference type="FunCoup" id="Q2FSA9">
    <property type="interactions" value="87"/>
</dbReference>
<dbReference type="STRING" id="323259.Mhun_3029"/>
<dbReference type="EnsemblBacteria" id="ABD42716">
    <property type="protein sequence ID" value="ABD42716"/>
    <property type="gene ID" value="Mhun_3029"/>
</dbReference>
<dbReference type="GeneID" id="3922930"/>
<dbReference type="KEGG" id="mhu:Mhun_3029"/>
<dbReference type="eggNOG" id="arCOG04131">
    <property type="taxonomic scope" value="Archaea"/>
</dbReference>
<dbReference type="HOGENOM" id="CLU_041220_0_2_2"/>
<dbReference type="InParanoid" id="Q2FSA9"/>
<dbReference type="OrthoDB" id="9883at2157"/>
<dbReference type="Proteomes" id="UP000001941">
    <property type="component" value="Chromosome"/>
</dbReference>
<dbReference type="GO" id="GO:0005737">
    <property type="term" value="C:cytoplasm"/>
    <property type="evidence" value="ECO:0007669"/>
    <property type="project" value="UniProtKB-SubCell"/>
</dbReference>
<dbReference type="GO" id="GO:0003723">
    <property type="term" value="F:RNA binding"/>
    <property type="evidence" value="ECO:0007669"/>
    <property type="project" value="UniProtKB-KW"/>
</dbReference>
<dbReference type="GO" id="GO:0000179">
    <property type="term" value="F:rRNA (adenine-N6,N6-)-dimethyltransferase activity"/>
    <property type="evidence" value="ECO:0007669"/>
    <property type="project" value="InterPro"/>
</dbReference>
<dbReference type="CDD" id="cd02440">
    <property type="entry name" value="AdoMet_MTases"/>
    <property type="match status" value="1"/>
</dbReference>
<dbReference type="Gene3D" id="1.10.8.100">
    <property type="entry name" value="Ribosomal RNA adenine dimethylase-like, domain 2"/>
    <property type="match status" value="1"/>
</dbReference>
<dbReference type="Gene3D" id="3.40.50.150">
    <property type="entry name" value="Vaccinia Virus protein VP39"/>
    <property type="match status" value="1"/>
</dbReference>
<dbReference type="HAMAP" id="MF_00607">
    <property type="entry name" value="16SrRNA_methyltr_A"/>
    <property type="match status" value="1"/>
</dbReference>
<dbReference type="InterPro" id="IPR001737">
    <property type="entry name" value="KsgA/Erm"/>
</dbReference>
<dbReference type="InterPro" id="IPR023165">
    <property type="entry name" value="rRNA_Ade_diMease-like_C"/>
</dbReference>
<dbReference type="InterPro" id="IPR020596">
    <property type="entry name" value="rRNA_Ade_Mease_Trfase_CS"/>
</dbReference>
<dbReference type="InterPro" id="IPR020598">
    <property type="entry name" value="rRNA_Ade_methylase_Trfase_N"/>
</dbReference>
<dbReference type="InterPro" id="IPR011530">
    <property type="entry name" value="rRNA_adenine_dimethylase"/>
</dbReference>
<dbReference type="InterPro" id="IPR029063">
    <property type="entry name" value="SAM-dependent_MTases_sf"/>
</dbReference>
<dbReference type="NCBIfam" id="TIGR00755">
    <property type="entry name" value="ksgA"/>
    <property type="match status" value="1"/>
</dbReference>
<dbReference type="PANTHER" id="PTHR11727">
    <property type="entry name" value="DIMETHYLADENOSINE TRANSFERASE"/>
    <property type="match status" value="1"/>
</dbReference>
<dbReference type="PANTHER" id="PTHR11727:SF7">
    <property type="entry name" value="DIMETHYLADENOSINE TRANSFERASE-RELATED"/>
    <property type="match status" value="1"/>
</dbReference>
<dbReference type="Pfam" id="PF00398">
    <property type="entry name" value="RrnaAD"/>
    <property type="match status" value="1"/>
</dbReference>
<dbReference type="SMART" id="SM00650">
    <property type="entry name" value="rADc"/>
    <property type="match status" value="1"/>
</dbReference>
<dbReference type="SUPFAM" id="SSF53335">
    <property type="entry name" value="S-adenosyl-L-methionine-dependent methyltransferases"/>
    <property type="match status" value="1"/>
</dbReference>
<dbReference type="PROSITE" id="PS01131">
    <property type="entry name" value="RRNA_A_DIMETH"/>
    <property type="match status" value="1"/>
</dbReference>
<dbReference type="PROSITE" id="PS51689">
    <property type="entry name" value="SAM_RNA_A_N6_MT"/>
    <property type="match status" value="1"/>
</dbReference>
<name>RSMA_METHJ</name>
<reference key="1">
    <citation type="journal article" date="2016" name="Stand. Genomic Sci.">
        <title>Complete genome sequence of Methanospirillum hungatei type strain JF1.</title>
        <authorList>
            <person name="Gunsalus R.P."/>
            <person name="Cook L.E."/>
            <person name="Crable B."/>
            <person name="Rohlin L."/>
            <person name="McDonald E."/>
            <person name="Mouttaki H."/>
            <person name="Sieber J.R."/>
            <person name="Poweleit N."/>
            <person name="Zhou H."/>
            <person name="Lapidus A.L."/>
            <person name="Daligault H.E."/>
            <person name="Land M."/>
            <person name="Gilna P."/>
            <person name="Ivanova N."/>
            <person name="Kyrpides N."/>
            <person name="Culley D.E."/>
            <person name="McInerney M.J."/>
        </authorList>
    </citation>
    <scope>NUCLEOTIDE SEQUENCE [LARGE SCALE GENOMIC DNA]</scope>
    <source>
        <strain>ATCC 27890 / DSM 864 / NBRC 100397 / JF-1</strain>
    </source>
</reference>
<protein>
    <recommendedName>
        <fullName evidence="1">Probable ribosomal RNA small subunit methyltransferase A</fullName>
        <ecNumber evidence="1">2.1.1.-</ecNumber>
    </recommendedName>
    <alternativeName>
        <fullName evidence="1">16S rRNA dimethyladenosine transferase</fullName>
    </alternativeName>
    <alternativeName>
        <fullName evidence="1">16S rRNA dimethylase</fullName>
    </alternativeName>
    <alternativeName>
        <fullName evidence="1">S-adenosylmethionine-6-N',N'-adenosyl(rRNA) dimethyltransferase</fullName>
    </alternativeName>
</protein>
<proteinExistence type="inferred from homology"/>
<comment type="function">
    <text evidence="1">Specifically dimethylates two adjacent adenosines in the loop of a conserved hairpin near the 3'-end of 16S rRNA in the 30S particle. May play a critical role in biogenesis of 30S subunits.</text>
</comment>
<comment type="subcellular location">
    <subcellularLocation>
        <location evidence="1">Cytoplasm</location>
    </subcellularLocation>
</comment>
<comment type="similarity">
    <text evidence="1">Belongs to the class I-like SAM-binding methyltransferase superfamily. rRNA adenine N(6)-methyltransferase family. RsmA subfamily.</text>
</comment>
<keyword id="KW-0963">Cytoplasm</keyword>
<keyword id="KW-0489">Methyltransferase</keyword>
<keyword id="KW-1185">Reference proteome</keyword>
<keyword id="KW-0694">RNA-binding</keyword>
<keyword id="KW-0698">rRNA processing</keyword>
<keyword id="KW-0949">S-adenosyl-L-methionine</keyword>
<keyword id="KW-0808">Transferase</keyword>
<accession>Q2FSA9</accession>
<gene>
    <name evidence="1" type="primary">rsmA</name>
    <name evidence="1" type="synonym">ksgA</name>
    <name type="ordered locus">Mhun_3029</name>
</gene>
<organism>
    <name type="scientific">Methanospirillum hungatei JF-1 (strain ATCC 27890 / DSM 864 / NBRC 100397 / JF-1)</name>
    <dbReference type="NCBI Taxonomy" id="323259"/>
    <lineage>
        <taxon>Archaea</taxon>
        <taxon>Methanobacteriati</taxon>
        <taxon>Methanobacteriota</taxon>
        <taxon>Stenosarchaea group</taxon>
        <taxon>Methanomicrobia</taxon>
        <taxon>Methanomicrobiales</taxon>
        <taxon>Methanospirillaceae</taxon>
        <taxon>Methanospirillum</taxon>
    </lineage>
</organism>